<accession>P63845</accession>
<accession>Q99UL6</accession>
<proteinExistence type="inferred from homology"/>
<comment type="function">
    <text evidence="1">DNA-binding global transcriptional regulator which is involved in the adaptive response to starvation and acts by directly or indirectly controlling the expression of numerous genes in response to nutrient availability. During rapid exponential growth, CodY is highly active and represses genes whose products allow adaptation to nutrient depletion.</text>
</comment>
<comment type="subcellular location">
    <subcellularLocation>
        <location evidence="1">Cytoplasm</location>
    </subcellularLocation>
</comment>
<comment type="similarity">
    <text evidence="1">Belongs to the CodY family.</text>
</comment>
<gene>
    <name evidence="1" type="primary">codY</name>
    <name type="ordered locus">MW1138</name>
</gene>
<dbReference type="EMBL" id="BA000033">
    <property type="protein sequence ID" value="BAB95003.1"/>
    <property type="molecule type" value="Genomic_DNA"/>
</dbReference>
<dbReference type="RefSeq" id="WP_000055337.1">
    <property type="nucleotide sequence ID" value="NC_003923.1"/>
</dbReference>
<dbReference type="SMR" id="P63845"/>
<dbReference type="KEGG" id="sam:MW1138"/>
<dbReference type="HOGENOM" id="CLU_089581_0_0_9"/>
<dbReference type="GO" id="GO:0005737">
    <property type="term" value="C:cytoplasm"/>
    <property type="evidence" value="ECO:0007669"/>
    <property type="project" value="UniProtKB-SubCell"/>
</dbReference>
<dbReference type="GO" id="GO:0003677">
    <property type="term" value="F:DNA binding"/>
    <property type="evidence" value="ECO:0007669"/>
    <property type="project" value="UniProtKB-UniRule"/>
</dbReference>
<dbReference type="GO" id="GO:0003700">
    <property type="term" value="F:DNA-binding transcription factor activity"/>
    <property type="evidence" value="ECO:0007669"/>
    <property type="project" value="InterPro"/>
</dbReference>
<dbReference type="GO" id="GO:0005525">
    <property type="term" value="F:GTP binding"/>
    <property type="evidence" value="ECO:0007669"/>
    <property type="project" value="InterPro"/>
</dbReference>
<dbReference type="GO" id="GO:0045892">
    <property type="term" value="P:negative regulation of DNA-templated transcription"/>
    <property type="evidence" value="ECO:0007669"/>
    <property type="project" value="UniProtKB-UniRule"/>
</dbReference>
<dbReference type="FunFam" id="1.10.10.10:FF:000034">
    <property type="entry name" value="GTP-sensing transcriptional pleiotropic repressor CodY"/>
    <property type="match status" value="1"/>
</dbReference>
<dbReference type="FunFam" id="3.30.450.40:FF:000003">
    <property type="entry name" value="GTP-sensing transcriptional pleiotropic repressor CodY"/>
    <property type="match status" value="1"/>
</dbReference>
<dbReference type="Gene3D" id="3.30.450.40">
    <property type="match status" value="1"/>
</dbReference>
<dbReference type="Gene3D" id="1.10.10.10">
    <property type="entry name" value="Winged helix-like DNA-binding domain superfamily/Winged helix DNA-binding domain"/>
    <property type="match status" value="1"/>
</dbReference>
<dbReference type="HAMAP" id="MF_00621">
    <property type="entry name" value="HTH_type_CodY"/>
    <property type="match status" value="1"/>
</dbReference>
<dbReference type="InterPro" id="IPR014154">
    <property type="entry name" value="CodY"/>
</dbReference>
<dbReference type="InterPro" id="IPR029016">
    <property type="entry name" value="GAF-like_dom_sf"/>
</dbReference>
<dbReference type="InterPro" id="IPR013198">
    <property type="entry name" value="GTP_trans_reg_CodY_C"/>
</dbReference>
<dbReference type="InterPro" id="IPR010312">
    <property type="entry name" value="Transc_reg_CodY_N"/>
</dbReference>
<dbReference type="InterPro" id="IPR036388">
    <property type="entry name" value="WH-like_DNA-bd_sf"/>
</dbReference>
<dbReference type="InterPro" id="IPR036390">
    <property type="entry name" value="WH_DNA-bd_sf"/>
</dbReference>
<dbReference type="NCBIfam" id="TIGR02787">
    <property type="entry name" value="codY_Gpos"/>
    <property type="match status" value="1"/>
</dbReference>
<dbReference type="NCBIfam" id="NF003170">
    <property type="entry name" value="PRK04158.1"/>
    <property type="match status" value="1"/>
</dbReference>
<dbReference type="PANTHER" id="PTHR40062:SF1">
    <property type="entry name" value="GLOBAL TRANSCRIPTIONAL REGULATOR CODY"/>
    <property type="match status" value="1"/>
</dbReference>
<dbReference type="PANTHER" id="PTHR40062">
    <property type="entry name" value="GTP-SENSING TRANSCRIPTIONAL PLEIOTROPIC REPRESSOR CODY"/>
    <property type="match status" value="1"/>
</dbReference>
<dbReference type="Pfam" id="PF06018">
    <property type="entry name" value="CodY"/>
    <property type="match status" value="1"/>
</dbReference>
<dbReference type="Pfam" id="PF08222">
    <property type="entry name" value="HTH_CodY"/>
    <property type="match status" value="1"/>
</dbReference>
<dbReference type="PIRSF" id="PIRSF011572">
    <property type="entry name" value="GTP_sensing_CodY"/>
    <property type="match status" value="1"/>
</dbReference>
<dbReference type="SUPFAM" id="SSF46785">
    <property type="entry name" value="Winged helix' DNA-binding domain"/>
    <property type="match status" value="1"/>
</dbReference>
<keyword id="KW-0963">Cytoplasm</keyword>
<keyword id="KW-0238">DNA-binding</keyword>
<keyword id="KW-0678">Repressor</keyword>
<keyword id="KW-0804">Transcription</keyword>
<keyword id="KW-0805">Transcription regulation</keyword>
<name>CODY_STAAW</name>
<protein>
    <recommendedName>
        <fullName evidence="1">Global transcriptional regulator CodY</fullName>
    </recommendedName>
</protein>
<reference key="1">
    <citation type="journal article" date="2002" name="Lancet">
        <title>Genome and virulence determinants of high virulence community-acquired MRSA.</title>
        <authorList>
            <person name="Baba T."/>
            <person name="Takeuchi F."/>
            <person name="Kuroda M."/>
            <person name="Yuzawa H."/>
            <person name="Aoki K."/>
            <person name="Oguchi A."/>
            <person name="Nagai Y."/>
            <person name="Iwama N."/>
            <person name="Asano K."/>
            <person name="Naimi T."/>
            <person name="Kuroda H."/>
            <person name="Cui L."/>
            <person name="Yamamoto K."/>
            <person name="Hiramatsu K."/>
        </authorList>
    </citation>
    <scope>NUCLEOTIDE SEQUENCE [LARGE SCALE GENOMIC DNA]</scope>
    <source>
        <strain>MW2</strain>
    </source>
</reference>
<feature type="chain" id="PRO_0000213236" description="Global transcriptional regulator CodY">
    <location>
        <begin position="1"/>
        <end position="257"/>
    </location>
</feature>
<feature type="DNA-binding region" description="H-T-H motif" evidence="1">
    <location>
        <begin position="203"/>
        <end position="222"/>
    </location>
</feature>
<feature type="region of interest" description="GAF domain" evidence="1">
    <location>
        <begin position="1"/>
        <end position="155"/>
    </location>
</feature>
<organism>
    <name type="scientific">Staphylococcus aureus (strain MW2)</name>
    <dbReference type="NCBI Taxonomy" id="196620"/>
    <lineage>
        <taxon>Bacteria</taxon>
        <taxon>Bacillati</taxon>
        <taxon>Bacillota</taxon>
        <taxon>Bacilli</taxon>
        <taxon>Bacillales</taxon>
        <taxon>Staphylococcaceae</taxon>
        <taxon>Staphylococcus</taxon>
    </lineage>
</organism>
<evidence type="ECO:0000255" key="1">
    <source>
        <dbReference type="HAMAP-Rule" id="MF_00621"/>
    </source>
</evidence>
<sequence length="257" mass="28755">MSLLSKTRELNTLLQKHKGIAVDFKDVAQTISSVTVTNVFIVSRRGKILGSSLNELLKSQRIIQMLEERHIPSEYTERLMEVKQTESNIDIDNVLTVFPPENRELFIDSRTTIFPILGGGERLGTLVLGRVHDDFNENDLVLGEYAATVIGMEILREKHSEVEKEARDKAAITMAINSLSYSEKEAIEHIFEELGGTEGLLIASKVADRVGITRSVIVNALRKLESAGVIESRSLGMKGTFIKVKKEKFLDELEKSK</sequence>